<keyword id="KW-0025">Alternative splicing</keyword>
<keyword id="KW-0158">Chromosome</keyword>
<keyword id="KW-0175">Coiled coil</keyword>
<keyword id="KW-0227">DNA damage</keyword>
<keyword id="KW-0234">DNA repair</keyword>
<keyword id="KW-0239">DNA-directed DNA polymerase</keyword>
<keyword id="KW-0240">DNA-directed RNA polymerase</keyword>
<keyword id="KW-0464">Manganese</keyword>
<keyword id="KW-0479">Metal-binding</keyword>
<keyword id="KW-0496">Mitochondrion</keyword>
<keyword id="KW-0548">Nucleotidyltransferase</keyword>
<keyword id="KW-0539">Nucleus</keyword>
<keyword id="KW-1185">Reference proteome</keyword>
<keyword id="KW-0804">Transcription</keyword>
<keyword id="KW-0808">Transferase</keyword>
<keyword id="KW-0862">Zinc</keyword>
<protein>
    <recommendedName>
        <fullName evidence="8">DNA-directed primase/polymerase protein</fullName>
        <ecNumber evidence="6">2.7.7.102</ecNumber>
        <ecNumber evidence="1">2.7.7.7</ecNumber>
    </recommendedName>
</protein>
<organism>
    <name type="scientific">Mus musculus</name>
    <name type="common">Mouse</name>
    <dbReference type="NCBI Taxonomy" id="10090"/>
    <lineage>
        <taxon>Eukaryota</taxon>
        <taxon>Metazoa</taxon>
        <taxon>Chordata</taxon>
        <taxon>Craniata</taxon>
        <taxon>Vertebrata</taxon>
        <taxon>Euteleostomi</taxon>
        <taxon>Mammalia</taxon>
        <taxon>Eutheria</taxon>
        <taxon>Euarchontoglires</taxon>
        <taxon>Glires</taxon>
        <taxon>Rodentia</taxon>
        <taxon>Myomorpha</taxon>
        <taxon>Muroidea</taxon>
        <taxon>Muridae</taxon>
        <taxon>Murinae</taxon>
        <taxon>Mus</taxon>
        <taxon>Mus</taxon>
    </lineage>
</organism>
<comment type="function">
    <text evidence="1 5 6">DNA primase and DNA polymerase required to tolerate replication-stalling lesions by bypassing them (PubMed:26926109, PubMed:29073063). Required to facilitate mitochondrial and nuclear replication fork progression by initiating de novo DNA synthesis using dNTPs and acting as an error-prone DNA polymerase able to bypass certain DNA lesions (By similarity). Shows a high capacity to tolerate DNA damage lesions such as 8oxoG and abasic sites in DNA (By similarity). Provides different translesion synthesis alternatives when DNA replication is stalled: able to synthesize DNA primers downstream of lesions, such as ultraviolet (UV) lesions, R-loops and G-quadruplexes, to allow DNA replication to continue (By similarity). Can also realign primers ahead of 'unreadable lesions' such as abasic sites and 6-4 photoproduct (6-4 pyrimidine-pyrimidinone), thereby skipping the lesion. Repriming avoids fork degradation while leading to accumulation of internal ssDNA gaps behind the forks (By similarity). Also able to incorporate nucleotides opposite DNA lesions such as 8oxoG, like a regular translesion synthesis DNA polymerase (By similarity). Also required for reinitiating stalled forks after UV damage during nuclear DNA replication (By similarity). Required for mitochondrial DNA (mtDNA) synthesis and replication, by reinitiating synthesis after UV damage or in the presence of chain-terminating nucleotides (PubMed:29073063). Prevents APOBEC family-mediated DNA mutagenesis by repriming downstream of abasic site to prohibit error-prone translesion synthesis (PubMed:26926109). Has non-overlapping function with POLH (By similarity). In addition to its role in DNA damage response, also required to maintain efficient nuclear and mitochondrial DNA replication in unperturbed cells (By similarity).</text>
</comment>
<comment type="catalytic activity">
    <reaction evidence="1">
        <text>ssDNA + n NTP = ssDNA/pppN(pN)n-1 hybrid + (n-1) diphosphate.</text>
        <dbReference type="EC" id="2.7.7.102"/>
    </reaction>
</comment>
<comment type="catalytic activity">
    <reaction evidence="1">
        <text>DNA(n) + a 2'-deoxyribonucleoside 5'-triphosphate = DNA(n+1) + diphosphate</text>
        <dbReference type="Rhea" id="RHEA:22508"/>
        <dbReference type="Rhea" id="RHEA-COMP:17339"/>
        <dbReference type="Rhea" id="RHEA-COMP:17340"/>
        <dbReference type="ChEBI" id="CHEBI:33019"/>
        <dbReference type="ChEBI" id="CHEBI:61560"/>
        <dbReference type="ChEBI" id="CHEBI:173112"/>
        <dbReference type="EC" id="2.7.7.7"/>
    </reaction>
    <physiologicalReaction direction="left-to-right" evidence="1">
        <dbReference type="Rhea" id="RHEA:22509"/>
    </physiologicalReaction>
</comment>
<comment type="cofactor">
    <cofactor evidence="1">
        <name>Mn(2+)</name>
        <dbReference type="ChEBI" id="CHEBI:29035"/>
    </cofactor>
    <text evidence="1">Can act both with Mn(2+) and Mg(2+) as cofactor in vitro, but Mn(2+) is the preferred cofactor in vivo. The polymerase activity incorporates correct dNTPs with much higher efficiency with Mn(2+) than with Mg(2+). The fidelity is slightly more accurate when Mg(2+) is the cofactor compared to Mn(2+). In the presence of Mn(2+), a conformational transition step from non-productive to productive PRIMPOL:DNA complexes limits the enzymatic turnover, whereas in the presence of Mg(2+), the chemical step becomes rate limiting.</text>
</comment>
<comment type="subunit">
    <text evidence="1">Interacts with RPA1; leading to recruitment to chromatin and stimulate DNA primase activity. Interacts with SSBP1. Interacts with POLDIP2; leading to enhance DNA polymerase activity.</text>
</comment>
<comment type="subcellular location">
    <subcellularLocation>
        <location evidence="1">Nucleus</location>
    </subcellularLocation>
    <subcellularLocation>
        <location evidence="1">Mitochondrion matrix</location>
    </subcellularLocation>
    <subcellularLocation>
        <location evidence="1">Chromosome</location>
    </subcellularLocation>
    <text evidence="1">Present in the nucleus, but a larger fraction is localized inside mitochondria. Associates with nuclear chromatin during the G1 and S phases of unperturbed cell cycles. Recruited to stalled replication forks following interaction with RPA1.</text>
</comment>
<comment type="alternative products">
    <event type="alternative splicing"/>
    <isoform>
        <id>Q6P1E7-1</id>
        <name>1</name>
        <sequence type="displayed"/>
    </isoform>
    <isoform>
        <id>Q6P1E7-2</id>
        <name>2</name>
        <sequence type="described" ref="VSP_023420 VSP_023421"/>
    </isoform>
</comment>
<comment type="domain">
    <text evidence="1">The zinc knuckle motif binds zinc and is required for the DNA primase activity. It facilitates the binding and selection of the 5'-nucleotide of the newly synthesized primer and the recognition of preferred initiation sites.</text>
</comment>
<comment type="domain">
    <text evidence="1">The RPA1-binding motifs (RBM) mediate interaction with RPA1 and are essential for recruitment to chromatin. The interaction is primarily mediated by RPA1-binding motif 1, which binds to the basic cleft of RPA1, with motif 2 plays a supporting role in RPA1-binding.</text>
</comment>
<comment type="domain">
    <text evidence="1">The presence of an Asp-Aaa-Glu (DxE) motif in the metal-binding active site favors the use of Mn(2+) ions to achieve optimal incoming nucleotide stabilization, especially required during primer synthesis. Glu-116 is required to stabilize the incoming nucleotide at the 3'-site.</text>
</comment>
<comment type="disruption phenotype">
    <text evidence="4">Mice are viable but show defects in mitochondrial DNA synthesis.</text>
</comment>
<comment type="similarity">
    <text evidence="9">Belongs to the eukaryotic-type primase small subunit family.</text>
</comment>
<reference key="1">
    <citation type="journal article" date="2005" name="Science">
        <title>The transcriptional landscape of the mammalian genome.</title>
        <authorList>
            <person name="Carninci P."/>
            <person name="Kasukawa T."/>
            <person name="Katayama S."/>
            <person name="Gough J."/>
            <person name="Frith M.C."/>
            <person name="Maeda N."/>
            <person name="Oyama R."/>
            <person name="Ravasi T."/>
            <person name="Lenhard B."/>
            <person name="Wells C."/>
            <person name="Kodzius R."/>
            <person name="Shimokawa K."/>
            <person name="Bajic V.B."/>
            <person name="Brenner S.E."/>
            <person name="Batalov S."/>
            <person name="Forrest A.R."/>
            <person name="Zavolan M."/>
            <person name="Davis M.J."/>
            <person name="Wilming L.G."/>
            <person name="Aidinis V."/>
            <person name="Allen J.E."/>
            <person name="Ambesi-Impiombato A."/>
            <person name="Apweiler R."/>
            <person name="Aturaliya R.N."/>
            <person name="Bailey T.L."/>
            <person name="Bansal M."/>
            <person name="Baxter L."/>
            <person name="Beisel K.W."/>
            <person name="Bersano T."/>
            <person name="Bono H."/>
            <person name="Chalk A.M."/>
            <person name="Chiu K.P."/>
            <person name="Choudhary V."/>
            <person name="Christoffels A."/>
            <person name="Clutterbuck D.R."/>
            <person name="Crowe M.L."/>
            <person name="Dalla E."/>
            <person name="Dalrymple B.P."/>
            <person name="de Bono B."/>
            <person name="Della Gatta G."/>
            <person name="di Bernardo D."/>
            <person name="Down T."/>
            <person name="Engstrom P."/>
            <person name="Fagiolini M."/>
            <person name="Faulkner G."/>
            <person name="Fletcher C.F."/>
            <person name="Fukushima T."/>
            <person name="Furuno M."/>
            <person name="Futaki S."/>
            <person name="Gariboldi M."/>
            <person name="Georgii-Hemming P."/>
            <person name="Gingeras T.R."/>
            <person name="Gojobori T."/>
            <person name="Green R.E."/>
            <person name="Gustincich S."/>
            <person name="Harbers M."/>
            <person name="Hayashi Y."/>
            <person name="Hensch T.K."/>
            <person name="Hirokawa N."/>
            <person name="Hill D."/>
            <person name="Huminiecki L."/>
            <person name="Iacono M."/>
            <person name="Ikeo K."/>
            <person name="Iwama A."/>
            <person name="Ishikawa T."/>
            <person name="Jakt M."/>
            <person name="Kanapin A."/>
            <person name="Katoh M."/>
            <person name="Kawasawa Y."/>
            <person name="Kelso J."/>
            <person name="Kitamura H."/>
            <person name="Kitano H."/>
            <person name="Kollias G."/>
            <person name="Krishnan S.P."/>
            <person name="Kruger A."/>
            <person name="Kummerfeld S.K."/>
            <person name="Kurochkin I.V."/>
            <person name="Lareau L.F."/>
            <person name="Lazarevic D."/>
            <person name="Lipovich L."/>
            <person name="Liu J."/>
            <person name="Liuni S."/>
            <person name="McWilliam S."/>
            <person name="Madan Babu M."/>
            <person name="Madera M."/>
            <person name="Marchionni L."/>
            <person name="Matsuda H."/>
            <person name="Matsuzawa S."/>
            <person name="Miki H."/>
            <person name="Mignone F."/>
            <person name="Miyake S."/>
            <person name="Morris K."/>
            <person name="Mottagui-Tabar S."/>
            <person name="Mulder N."/>
            <person name="Nakano N."/>
            <person name="Nakauchi H."/>
            <person name="Ng P."/>
            <person name="Nilsson R."/>
            <person name="Nishiguchi S."/>
            <person name="Nishikawa S."/>
            <person name="Nori F."/>
            <person name="Ohara O."/>
            <person name="Okazaki Y."/>
            <person name="Orlando V."/>
            <person name="Pang K.C."/>
            <person name="Pavan W.J."/>
            <person name="Pavesi G."/>
            <person name="Pesole G."/>
            <person name="Petrovsky N."/>
            <person name="Piazza S."/>
            <person name="Reed J."/>
            <person name="Reid J.F."/>
            <person name="Ring B.Z."/>
            <person name="Ringwald M."/>
            <person name="Rost B."/>
            <person name="Ruan Y."/>
            <person name="Salzberg S.L."/>
            <person name="Sandelin A."/>
            <person name="Schneider C."/>
            <person name="Schoenbach C."/>
            <person name="Sekiguchi K."/>
            <person name="Semple C.A."/>
            <person name="Seno S."/>
            <person name="Sessa L."/>
            <person name="Sheng Y."/>
            <person name="Shibata Y."/>
            <person name="Shimada H."/>
            <person name="Shimada K."/>
            <person name="Silva D."/>
            <person name="Sinclair B."/>
            <person name="Sperling S."/>
            <person name="Stupka E."/>
            <person name="Sugiura K."/>
            <person name="Sultana R."/>
            <person name="Takenaka Y."/>
            <person name="Taki K."/>
            <person name="Tammoja K."/>
            <person name="Tan S.L."/>
            <person name="Tang S."/>
            <person name="Taylor M.S."/>
            <person name="Tegner J."/>
            <person name="Teichmann S.A."/>
            <person name="Ueda H.R."/>
            <person name="van Nimwegen E."/>
            <person name="Verardo R."/>
            <person name="Wei C.L."/>
            <person name="Yagi K."/>
            <person name="Yamanishi H."/>
            <person name="Zabarovsky E."/>
            <person name="Zhu S."/>
            <person name="Zimmer A."/>
            <person name="Hide W."/>
            <person name="Bult C."/>
            <person name="Grimmond S.M."/>
            <person name="Teasdale R.D."/>
            <person name="Liu E.T."/>
            <person name="Brusic V."/>
            <person name="Quackenbush J."/>
            <person name="Wahlestedt C."/>
            <person name="Mattick J.S."/>
            <person name="Hume D.A."/>
            <person name="Kai C."/>
            <person name="Sasaki D."/>
            <person name="Tomaru Y."/>
            <person name="Fukuda S."/>
            <person name="Kanamori-Katayama M."/>
            <person name="Suzuki M."/>
            <person name="Aoki J."/>
            <person name="Arakawa T."/>
            <person name="Iida J."/>
            <person name="Imamura K."/>
            <person name="Itoh M."/>
            <person name="Kato T."/>
            <person name="Kawaji H."/>
            <person name="Kawagashira N."/>
            <person name="Kawashima T."/>
            <person name="Kojima M."/>
            <person name="Kondo S."/>
            <person name="Konno H."/>
            <person name="Nakano K."/>
            <person name="Ninomiya N."/>
            <person name="Nishio T."/>
            <person name="Okada M."/>
            <person name="Plessy C."/>
            <person name="Shibata K."/>
            <person name="Shiraki T."/>
            <person name="Suzuki S."/>
            <person name="Tagami M."/>
            <person name="Waki K."/>
            <person name="Watahiki A."/>
            <person name="Okamura-Oho Y."/>
            <person name="Suzuki H."/>
            <person name="Kawai J."/>
            <person name="Hayashizaki Y."/>
        </authorList>
    </citation>
    <scope>NUCLEOTIDE SEQUENCE [LARGE SCALE MRNA] (ISOFORM 2)</scope>
    <source>
        <strain>C57BL/6J</strain>
    </source>
</reference>
<reference key="2">
    <citation type="journal article" date="2004" name="Genome Res.">
        <title>The status, quality, and expansion of the NIH full-length cDNA project: the Mammalian Gene Collection (MGC).</title>
        <authorList>
            <consortium name="The MGC Project Team"/>
        </authorList>
    </citation>
    <scope>NUCLEOTIDE SEQUENCE [LARGE SCALE MRNA] (ISOFORM 1)</scope>
    <source>
        <strain>C57BL/6J</strain>
        <tissue>Brain</tissue>
    </source>
</reference>
<reference key="3">
    <citation type="journal article" date="2013" name="Mol. Cell">
        <title>PrimPol, an archaic primase/polymerase operating in human cells.</title>
        <authorList>
            <person name="Garcia-Gomez S."/>
            <person name="Reyes A."/>
            <person name="Martinez-Jimenez M.I."/>
            <person name="Chocron E.S."/>
            <person name="Mouron S."/>
            <person name="Terrados G."/>
            <person name="Powell C."/>
            <person name="Salido E."/>
            <person name="Mendez J."/>
            <person name="Holt I.J."/>
            <person name="Blanco L."/>
        </authorList>
    </citation>
    <scope>DISRUPTION PHENOTYPE</scope>
</reference>
<reference key="4">
    <citation type="journal article" date="2016" name="Nucleic Acids Res.">
        <title>PrimPol prevents APOBEC/AID family mediated DNA mutagenesis.</title>
        <authorList>
            <person name="Pilzecker B."/>
            <person name="Buoninfante O.A."/>
            <person name="Pritchard C."/>
            <person name="Blomberg O.S."/>
            <person name="Huijbers I.J."/>
            <person name="van den Berk P.C."/>
            <person name="Jacobs H."/>
        </authorList>
    </citation>
    <scope>FUNCTION</scope>
</reference>
<reference key="5">
    <citation type="journal article" date="2017" name="Proc. Natl. Acad. Sci. U.S.A.">
        <title>PrimPol is required for replication reinitiation after mtDNA damage.</title>
        <authorList>
            <person name="Torregrosa-Munumer R."/>
            <person name="Forslund J.M.E."/>
            <person name="Goffart S."/>
            <person name="Pfeiffer A."/>
            <person name="Stojkovic G."/>
            <person name="Carvalho G."/>
            <person name="Al-Furoukh N."/>
            <person name="Blanco L."/>
            <person name="Wanrooij S."/>
            <person name="Pohjoismaeki J.L.O."/>
        </authorList>
    </citation>
    <scope>FUNCTION</scope>
    <scope>CATALYTIC ACTIVITY</scope>
</reference>
<proteinExistence type="evidence at protein level"/>
<accession>Q6P1E7</accession>
<accession>Q8BSR3</accession>
<feature type="chain" id="PRO_0000279396" description="DNA-directed primase/polymerase protein">
    <location>
        <begin position="1"/>
        <end position="537"/>
    </location>
</feature>
<feature type="region of interest" description="Interaction with RPA1" evidence="1">
    <location>
        <begin position="462"/>
        <end position="536"/>
    </location>
</feature>
<feature type="region of interest" description="Disordered" evidence="3">
    <location>
        <begin position="462"/>
        <end position="481"/>
    </location>
</feature>
<feature type="coiled-coil region" evidence="2">
    <location>
        <begin position="1"/>
        <end position="22"/>
    </location>
</feature>
<feature type="short sequence motif" description="Zinc knuckle motif" evidence="1">
    <location>
        <begin position="401"/>
        <end position="434"/>
    </location>
</feature>
<feature type="short sequence motif" description="RPA1-binding motif 1" evidence="1">
    <location>
        <begin position="494"/>
        <end position="507"/>
    </location>
</feature>
<feature type="short sequence motif" description="RPA1-binding motif 2" evidence="1">
    <location>
        <begin position="524"/>
        <end position="532"/>
    </location>
</feature>
<feature type="compositionally biased region" description="Low complexity" evidence="3">
    <location>
        <begin position="468"/>
        <end position="478"/>
    </location>
</feature>
<feature type="binding site" evidence="1">
    <location>
        <position position="76"/>
    </location>
    <ligand>
        <name>substrate</name>
    </ligand>
</feature>
<feature type="binding site" evidence="1">
    <location>
        <begin position="114"/>
        <end position="116"/>
    </location>
    <ligand>
        <name>substrate</name>
    </ligand>
</feature>
<feature type="binding site" evidence="1">
    <location>
        <position position="114"/>
    </location>
    <ligand>
        <name>Mn(2+)</name>
        <dbReference type="ChEBI" id="CHEBI:29035"/>
        <note>catalytic</note>
    </ligand>
</feature>
<feature type="binding site" evidence="1">
    <location>
        <position position="116"/>
    </location>
    <ligand>
        <name>Mn(2+)</name>
        <dbReference type="ChEBI" id="CHEBI:29035"/>
        <note>catalytic</note>
    </ligand>
</feature>
<feature type="binding site" evidence="1">
    <location>
        <begin position="165"/>
        <end position="169"/>
    </location>
    <ligand>
        <name>substrate</name>
    </ligand>
</feature>
<feature type="binding site" evidence="1">
    <location>
        <begin position="270"/>
        <end position="273"/>
    </location>
    <ligand>
        <name>substrate</name>
    </ligand>
</feature>
<feature type="binding site" evidence="1">
    <location>
        <position position="279"/>
    </location>
    <ligand>
        <name>substrate</name>
    </ligand>
</feature>
<feature type="binding site" evidence="1">
    <location>
        <position position="401"/>
    </location>
    <ligand>
        <name>Zn(2+)</name>
        <dbReference type="ChEBI" id="CHEBI:29105"/>
    </ligand>
</feature>
<feature type="binding site" evidence="1">
    <location>
        <position position="408"/>
    </location>
    <ligand>
        <name>Zn(2+)</name>
        <dbReference type="ChEBI" id="CHEBI:29105"/>
    </ligand>
</feature>
<feature type="binding site" evidence="1">
    <location>
        <position position="428"/>
    </location>
    <ligand>
        <name>Zn(2+)</name>
        <dbReference type="ChEBI" id="CHEBI:29105"/>
    </ligand>
</feature>
<feature type="binding site" evidence="1">
    <location>
        <position position="433"/>
    </location>
    <ligand>
        <name>Zn(2+)</name>
        <dbReference type="ChEBI" id="CHEBI:29105"/>
    </ligand>
</feature>
<feature type="splice variant" id="VSP_023420" description="In isoform 2." evidence="7">
    <original>VSNVRFSDTLRVLTC</original>
    <variation>ILRYSASSHMPPISD</variation>
    <location>
        <begin position="314"/>
        <end position="328"/>
    </location>
</feature>
<feature type="splice variant" id="VSP_023421" description="In isoform 2." evidence="7">
    <location>
        <begin position="329"/>
        <end position="537"/>
    </location>
</feature>
<feature type="sequence conflict" description="In Ref. 1; BAC27128." evidence="9" ref="1">
    <original>K</original>
    <variation>R</variation>
    <location>
        <position position="110"/>
    </location>
</feature>
<feature type="sequence conflict" description="In Ref. 1; BAC27128." evidence="9" ref="1">
    <original>S</original>
    <variation>T</variation>
    <location>
        <position position="299"/>
    </location>
</feature>
<name>PRIPO_MOUSE</name>
<gene>
    <name evidence="8 10" type="primary">Primpol</name>
</gene>
<sequence>MLRKWEARVKQIEERASHYERKPLSSVYRPRLAKPEEPSSIWKLFHRQNQAFNFVKSCKESVHVFALECKRGNGQRIYLVTSYAQLWFYYKTRKTLLHCYEVIPENAVCKLYFDLEFNKLANPGADGKMMVALLIQHVCKALEEFYNVQCSAEDVFNLDSSTEEKFSRHLIFQLHNVAFKDNRHAGNFVRKILQPALHLIAEDDEAKVPEAVGQDASGFSVTPLKQEISEAREKVGLPKQCDPDLSFLVVKNHMGEKCLFVDLGVYTKNRNFRLYQSSKIGKCVSLEVAEDNRFIPKQSKDISEENQYFLSSLVSNVRFSDTLRVLTCHPSQTKRKRAECFNSTGTSVESIEGFQGSPYPEVDQFVLSLVNKHDIKGGIRRWNYFFPEELLVYDICKYRWCENIGRAHKSNNIMILVDLKNEVWYQKCHDPVCKAQNFKSTCSPLPTEVSLLFLLKDEDFTSGETDDTSTSLTKDSQTPPSCNLSAGGLSAAAWDDEDDALFLEATEDAEFADAADKSLGSMDDIPDELIIEALQNS</sequence>
<evidence type="ECO:0000250" key="1">
    <source>
        <dbReference type="UniProtKB" id="Q96LW4"/>
    </source>
</evidence>
<evidence type="ECO:0000255" key="2"/>
<evidence type="ECO:0000256" key="3">
    <source>
        <dbReference type="SAM" id="MobiDB-lite"/>
    </source>
</evidence>
<evidence type="ECO:0000269" key="4">
    <source>
    </source>
</evidence>
<evidence type="ECO:0000269" key="5">
    <source>
    </source>
</evidence>
<evidence type="ECO:0000269" key="6">
    <source>
    </source>
</evidence>
<evidence type="ECO:0000303" key="7">
    <source>
    </source>
</evidence>
<evidence type="ECO:0000303" key="8">
    <source>
    </source>
</evidence>
<evidence type="ECO:0000305" key="9"/>
<evidence type="ECO:0000312" key="10">
    <source>
        <dbReference type="MGI" id="MGI:3603756"/>
    </source>
</evidence>
<dbReference type="EC" id="2.7.7.102" evidence="6"/>
<dbReference type="EC" id="2.7.7.7" evidence="1"/>
<dbReference type="EMBL" id="AK030772">
    <property type="protein sequence ID" value="BAC27128.1"/>
    <property type="molecule type" value="mRNA"/>
</dbReference>
<dbReference type="EMBL" id="BC065112">
    <property type="protein sequence ID" value="AAH65112.1"/>
    <property type="molecule type" value="mRNA"/>
</dbReference>
<dbReference type="CCDS" id="CCDS40334.1">
    <molecule id="Q6P1E7-1"/>
</dbReference>
<dbReference type="RefSeq" id="NP_001001184.1">
    <molecule id="Q6P1E7-1"/>
    <property type="nucleotide sequence ID" value="NM_001001184.2"/>
</dbReference>
<dbReference type="RefSeq" id="XP_006509521.1">
    <property type="nucleotide sequence ID" value="XM_006509458.3"/>
</dbReference>
<dbReference type="RefSeq" id="XP_006509522.1">
    <property type="nucleotide sequence ID" value="XM_006509459.3"/>
</dbReference>
<dbReference type="RefSeq" id="XP_006509523.1">
    <property type="nucleotide sequence ID" value="XM_006509460.3"/>
</dbReference>
<dbReference type="RefSeq" id="XP_006509527.1">
    <property type="nucleotide sequence ID" value="XM_006509464.2"/>
</dbReference>
<dbReference type="RefSeq" id="XP_017168376.1">
    <property type="nucleotide sequence ID" value="XM_017312887.1"/>
</dbReference>
<dbReference type="RefSeq" id="XP_036010045.1">
    <molecule id="Q6P1E7-1"/>
    <property type="nucleotide sequence ID" value="XM_036154152.1"/>
</dbReference>
<dbReference type="SMR" id="Q6P1E7"/>
<dbReference type="BioGRID" id="240480">
    <property type="interactions" value="4"/>
</dbReference>
<dbReference type="FunCoup" id="Q6P1E7">
    <property type="interactions" value="3123"/>
</dbReference>
<dbReference type="STRING" id="10090.ENSMUSP00000036119"/>
<dbReference type="PhosphoSitePlus" id="Q6P1E7"/>
<dbReference type="PaxDb" id="10090-ENSMUSP00000036119"/>
<dbReference type="Antibodypedia" id="66503">
    <property type="antibodies" value="34 antibodies from 9 providers"/>
</dbReference>
<dbReference type="Ensembl" id="ENSMUST00000040468.16">
    <molecule id="Q6P1E7-1"/>
    <property type="protein sequence ID" value="ENSMUSP00000036119.9"/>
    <property type="gene ID" value="ENSMUSG00000038225.16"/>
</dbReference>
<dbReference type="Ensembl" id="ENSMUST00000209787.2">
    <molecule id="Q6P1E7-1"/>
    <property type="protein sequence ID" value="ENSMUSP00000148093.2"/>
    <property type="gene ID" value="ENSMUSG00000038225.16"/>
</dbReference>
<dbReference type="Ensembl" id="ENSMUST00000211400.2">
    <molecule id="Q6P1E7-1"/>
    <property type="protein sequence ID" value="ENSMUSP00000147574.2"/>
    <property type="gene ID" value="ENSMUSG00000038225.16"/>
</dbReference>
<dbReference type="GeneID" id="408022"/>
<dbReference type="KEGG" id="mmu:408022"/>
<dbReference type="UCSC" id="uc009lqi.1">
    <molecule id="Q6P1E7-1"/>
    <property type="organism name" value="mouse"/>
</dbReference>
<dbReference type="AGR" id="MGI:3603756"/>
<dbReference type="CTD" id="201973"/>
<dbReference type="MGI" id="MGI:3603756">
    <property type="gene designation" value="Primpol"/>
</dbReference>
<dbReference type="VEuPathDB" id="HostDB:ENSMUSG00000038225"/>
<dbReference type="eggNOG" id="ENOG502QS1Q">
    <property type="taxonomic scope" value="Eukaryota"/>
</dbReference>
<dbReference type="GeneTree" id="ENSGT00390000003901"/>
<dbReference type="HOGENOM" id="CLU_027838_0_0_1"/>
<dbReference type="InParanoid" id="Q6P1E7"/>
<dbReference type="OMA" id="HYEVIQD"/>
<dbReference type="OrthoDB" id="5988181at2759"/>
<dbReference type="PhylomeDB" id="Q6P1E7"/>
<dbReference type="TreeFam" id="TF328961"/>
<dbReference type="BioGRID-ORCS" id="408022">
    <property type="hits" value="5 hits in 111 CRISPR screens"/>
</dbReference>
<dbReference type="ChiTaRS" id="Primpol">
    <property type="organism name" value="mouse"/>
</dbReference>
<dbReference type="PRO" id="PR:Q6P1E7"/>
<dbReference type="Proteomes" id="UP000000589">
    <property type="component" value="Chromosome 8"/>
</dbReference>
<dbReference type="RNAct" id="Q6P1E7">
    <property type="molecule type" value="protein"/>
</dbReference>
<dbReference type="Bgee" id="ENSMUSG00000038225">
    <property type="expression patterns" value="Expressed in dorsal pancreas and 181 other cell types or tissues"/>
</dbReference>
<dbReference type="ExpressionAtlas" id="Q6P1E7">
    <property type="expression patterns" value="baseline and differential"/>
</dbReference>
<dbReference type="GO" id="GO:0000428">
    <property type="term" value="C:DNA-directed RNA polymerase complex"/>
    <property type="evidence" value="ECO:0007669"/>
    <property type="project" value="UniProtKB-KW"/>
</dbReference>
<dbReference type="GO" id="GO:0005759">
    <property type="term" value="C:mitochondrial matrix"/>
    <property type="evidence" value="ECO:0000250"/>
    <property type="project" value="UniProtKB"/>
</dbReference>
<dbReference type="GO" id="GO:0005634">
    <property type="term" value="C:nucleus"/>
    <property type="evidence" value="ECO:0000250"/>
    <property type="project" value="UniProtKB"/>
</dbReference>
<dbReference type="GO" id="GO:0005657">
    <property type="term" value="C:replication fork"/>
    <property type="evidence" value="ECO:0000250"/>
    <property type="project" value="UniProtKB"/>
</dbReference>
<dbReference type="GO" id="GO:0003682">
    <property type="term" value="F:chromatin binding"/>
    <property type="evidence" value="ECO:0000250"/>
    <property type="project" value="UniProtKB"/>
</dbReference>
<dbReference type="GO" id="GO:0003887">
    <property type="term" value="F:DNA-directed DNA polymerase activity"/>
    <property type="evidence" value="ECO:0000250"/>
    <property type="project" value="UniProtKB"/>
</dbReference>
<dbReference type="GO" id="GO:0003899">
    <property type="term" value="F:DNA-directed RNA polymerase activity"/>
    <property type="evidence" value="ECO:0000314"/>
    <property type="project" value="UniProtKB"/>
</dbReference>
<dbReference type="GO" id="GO:0030145">
    <property type="term" value="F:manganese ion binding"/>
    <property type="evidence" value="ECO:0000250"/>
    <property type="project" value="UniProtKB"/>
</dbReference>
<dbReference type="GO" id="GO:0008270">
    <property type="term" value="F:zinc ion binding"/>
    <property type="evidence" value="ECO:0000250"/>
    <property type="project" value="UniProtKB"/>
</dbReference>
<dbReference type="GO" id="GO:0006269">
    <property type="term" value="P:DNA replication, synthesis of primer"/>
    <property type="evidence" value="ECO:0007669"/>
    <property type="project" value="InterPro"/>
</dbReference>
<dbReference type="GO" id="GO:0042276">
    <property type="term" value="P:error-prone translesion synthesis"/>
    <property type="evidence" value="ECO:0000250"/>
    <property type="project" value="UniProtKB"/>
</dbReference>
<dbReference type="GO" id="GO:0043504">
    <property type="term" value="P:mitochondrial DNA repair"/>
    <property type="evidence" value="ECO:0000314"/>
    <property type="project" value="UniProtKB"/>
</dbReference>
<dbReference type="GO" id="GO:0006264">
    <property type="term" value="P:mitochondrial DNA replication"/>
    <property type="evidence" value="ECO:0000315"/>
    <property type="project" value="UniProtKB"/>
</dbReference>
<dbReference type="GO" id="GO:0062176">
    <property type="term" value="P:R-loop processing"/>
    <property type="evidence" value="ECO:0000250"/>
    <property type="project" value="UniProtKB"/>
</dbReference>
<dbReference type="GO" id="GO:0031297">
    <property type="term" value="P:replication fork processing"/>
    <property type="evidence" value="ECO:0000250"/>
    <property type="project" value="UniProtKB"/>
</dbReference>
<dbReference type="GO" id="GO:0009411">
    <property type="term" value="P:response to UV"/>
    <property type="evidence" value="ECO:0000250"/>
    <property type="project" value="UniProtKB"/>
</dbReference>
<dbReference type="GO" id="GO:0019985">
    <property type="term" value="P:translesion synthesis"/>
    <property type="evidence" value="ECO:0000250"/>
    <property type="project" value="UniProtKB"/>
</dbReference>
<dbReference type="CDD" id="cd22256">
    <property type="entry name" value="PrimPol_RBD"/>
    <property type="match status" value="1"/>
</dbReference>
<dbReference type="InterPro" id="IPR002755">
    <property type="entry name" value="DNA_primase_S"/>
</dbReference>
<dbReference type="InterPro" id="IPR044917">
    <property type="entry name" value="PRIMPOL"/>
</dbReference>
<dbReference type="PANTHER" id="PTHR31399">
    <property type="entry name" value="DNA-DIRECTED PRIMASE / POLYMERASE PROTEIN"/>
    <property type="match status" value="1"/>
</dbReference>
<dbReference type="PANTHER" id="PTHR31399:SF0">
    <property type="entry name" value="DNA-DIRECTED PRIMASE_POLYMERASE PROTEIN"/>
    <property type="match status" value="1"/>
</dbReference>
<dbReference type="Pfam" id="PF01896">
    <property type="entry name" value="DNA_primase_S"/>
    <property type="match status" value="1"/>
</dbReference>
<dbReference type="Pfam" id="PF03121">
    <property type="entry name" value="Herpes_UL52"/>
    <property type="match status" value="1"/>
</dbReference>